<reference key="1">
    <citation type="journal article" date="1999" name="Nature">
        <title>Evidence for lateral gene transfer between Archaea and Bacteria from genome sequence of Thermotoga maritima.</title>
        <authorList>
            <person name="Nelson K.E."/>
            <person name="Clayton R.A."/>
            <person name="Gill S.R."/>
            <person name="Gwinn M.L."/>
            <person name="Dodson R.J."/>
            <person name="Haft D.H."/>
            <person name="Hickey E.K."/>
            <person name="Peterson J.D."/>
            <person name="Nelson W.C."/>
            <person name="Ketchum K.A."/>
            <person name="McDonald L.A."/>
            <person name="Utterback T.R."/>
            <person name="Malek J.A."/>
            <person name="Linher K.D."/>
            <person name="Garrett M.M."/>
            <person name="Stewart A.M."/>
            <person name="Cotton M.D."/>
            <person name="Pratt M.S."/>
            <person name="Phillips C.A."/>
            <person name="Richardson D.L."/>
            <person name="Heidelberg J.F."/>
            <person name="Sutton G.G."/>
            <person name="Fleischmann R.D."/>
            <person name="Eisen J.A."/>
            <person name="White O."/>
            <person name="Salzberg S.L."/>
            <person name="Smith H.O."/>
            <person name="Venter J.C."/>
            <person name="Fraser C.M."/>
        </authorList>
    </citation>
    <scope>NUCLEOTIDE SEQUENCE [LARGE SCALE GENOMIC DNA]</scope>
    <source>
        <strain>ATCC 43589 / DSM 3109 / JCM 10099 / NBRC 100826 / MSB8</strain>
    </source>
</reference>
<protein>
    <recommendedName>
        <fullName evidence="1">Translation initiation factor IF-1</fullName>
    </recommendedName>
</protein>
<gene>
    <name evidence="1" type="primary">infA</name>
    <name type="ordered locus">TM_1477</name>
</gene>
<organism>
    <name type="scientific">Thermotoga maritima (strain ATCC 43589 / DSM 3109 / JCM 10099 / NBRC 100826 / MSB8)</name>
    <dbReference type="NCBI Taxonomy" id="243274"/>
    <lineage>
        <taxon>Bacteria</taxon>
        <taxon>Thermotogati</taxon>
        <taxon>Thermotogota</taxon>
        <taxon>Thermotogae</taxon>
        <taxon>Thermotogales</taxon>
        <taxon>Thermotogaceae</taxon>
        <taxon>Thermotoga</taxon>
    </lineage>
</organism>
<proteinExistence type="inferred from homology"/>
<evidence type="ECO:0000255" key="1">
    <source>
        <dbReference type="HAMAP-Rule" id="MF_00075"/>
    </source>
</evidence>
<accession>P56866</accession>
<feature type="chain" id="PRO_0000095891" description="Translation initiation factor IF-1">
    <location>
        <begin position="1"/>
        <end position="74"/>
    </location>
</feature>
<feature type="domain" description="S1-like" evidence="1">
    <location>
        <begin position="1"/>
        <end position="72"/>
    </location>
</feature>
<sequence length="74" mass="8589">MGKEDVIRMEGTIIEALPNAMFRVELDNGHKVLAHVSXRMRKNFIRLVPGDRVIVELSVYDLTRGRIVYRKKPE</sequence>
<keyword id="KW-0963">Cytoplasm</keyword>
<keyword id="KW-0396">Initiation factor</keyword>
<keyword id="KW-0648">Protein biosynthesis</keyword>
<keyword id="KW-1185">Reference proteome</keyword>
<keyword id="KW-0694">RNA-binding</keyword>
<keyword id="KW-0699">rRNA-binding</keyword>
<comment type="function">
    <text evidence="1">One of the essential components for the initiation of protein synthesis. Stabilizes the binding of IF-2 and IF-3 on the 30S subunit to which N-formylmethionyl-tRNA(fMet) subsequently binds. Helps modulate mRNA selection, yielding the 30S pre-initiation complex (PIC). Upon addition of the 50S ribosomal subunit IF-1, IF-2 and IF-3 are released leaving the mature 70S translation initiation complex.</text>
</comment>
<comment type="subunit">
    <text evidence="1">Component of the 30S ribosomal translation pre-initiation complex which assembles on the 30S ribosome in the order IF-2 and IF-3, IF-1 and N-formylmethionyl-tRNA(fMet); mRNA recruitment can occur at any time during PIC assembly.</text>
</comment>
<comment type="subcellular location">
    <subcellularLocation>
        <location evidence="1">Cytoplasm</location>
    </subcellularLocation>
</comment>
<comment type="similarity">
    <text evidence="1">Belongs to the IF-1 family.</text>
</comment>
<name>IF1_THEMA</name>
<dbReference type="EMBL" id="AE000512">
    <property type="status" value="NOT_ANNOTATED_CDS"/>
    <property type="molecule type" value="Genomic_DNA"/>
</dbReference>
<dbReference type="RefSeq" id="NP_229277.1">
    <property type="nucleotide sequence ID" value="NC_000853.1"/>
</dbReference>
<dbReference type="FunCoup" id="P56866">
    <property type="interactions" value="286"/>
</dbReference>
<dbReference type="PaxDb" id="243274-THEMA_06915"/>
<dbReference type="PATRIC" id="fig|243274.5.peg.1493"/>
<dbReference type="eggNOG" id="COG0361">
    <property type="taxonomic scope" value="Bacteria"/>
</dbReference>
<dbReference type="InParanoid" id="P56866"/>
<dbReference type="OrthoDB" id="9803250at2"/>
<dbReference type="Proteomes" id="UP000008183">
    <property type="component" value="Chromosome"/>
</dbReference>
<dbReference type="GO" id="GO:0005829">
    <property type="term" value="C:cytosol"/>
    <property type="evidence" value="ECO:0000318"/>
    <property type="project" value="GO_Central"/>
</dbReference>
<dbReference type="GO" id="GO:0043022">
    <property type="term" value="F:ribosome binding"/>
    <property type="evidence" value="ECO:0000318"/>
    <property type="project" value="GO_Central"/>
</dbReference>
<dbReference type="GO" id="GO:0019843">
    <property type="term" value="F:rRNA binding"/>
    <property type="evidence" value="ECO:0007669"/>
    <property type="project" value="UniProtKB-UniRule"/>
</dbReference>
<dbReference type="GO" id="GO:0003743">
    <property type="term" value="F:translation initiation factor activity"/>
    <property type="evidence" value="ECO:0007669"/>
    <property type="project" value="UniProtKB-UniRule"/>
</dbReference>
<dbReference type="CDD" id="cd04451">
    <property type="entry name" value="S1_IF1"/>
    <property type="match status" value="1"/>
</dbReference>
<dbReference type="FunFam" id="2.40.50.140:FF:000002">
    <property type="entry name" value="Translation initiation factor IF-1"/>
    <property type="match status" value="1"/>
</dbReference>
<dbReference type="Gene3D" id="2.40.50.140">
    <property type="entry name" value="Nucleic acid-binding proteins"/>
    <property type="match status" value="1"/>
</dbReference>
<dbReference type="HAMAP" id="MF_00075">
    <property type="entry name" value="IF_1"/>
    <property type="match status" value="1"/>
</dbReference>
<dbReference type="InterPro" id="IPR012340">
    <property type="entry name" value="NA-bd_OB-fold"/>
</dbReference>
<dbReference type="InterPro" id="IPR006196">
    <property type="entry name" value="RNA-binding_domain_S1_IF1"/>
</dbReference>
<dbReference type="InterPro" id="IPR003029">
    <property type="entry name" value="S1_domain"/>
</dbReference>
<dbReference type="InterPro" id="IPR004368">
    <property type="entry name" value="TIF_IF1"/>
</dbReference>
<dbReference type="NCBIfam" id="TIGR00008">
    <property type="entry name" value="infA"/>
    <property type="match status" value="1"/>
</dbReference>
<dbReference type="PANTHER" id="PTHR33370">
    <property type="entry name" value="TRANSLATION INITIATION FACTOR IF-1, CHLOROPLASTIC"/>
    <property type="match status" value="1"/>
</dbReference>
<dbReference type="PANTHER" id="PTHR33370:SF1">
    <property type="entry name" value="TRANSLATION INITIATION FACTOR IF-1, CHLOROPLASTIC"/>
    <property type="match status" value="1"/>
</dbReference>
<dbReference type="Pfam" id="PF01176">
    <property type="entry name" value="eIF-1a"/>
    <property type="match status" value="1"/>
</dbReference>
<dbReference type="SMART" id="SM00316">
    <property type="entry name" value="S1"/>
    <property type="match status" value="1"/>
</dbReference>
<dbReference type="SUPFAM" id="SSF50249">
    <property type="entry name" value="Nucleic acid-binding proteins"/>
    <property type="match status" value="1"/>
</dbReference>
<dbReference type="PROSITE" id="PS50832">
    <property type="entry name" value="S1_IF1_TYPE"/>
    <property type="match status" value="1"/>
</dbReference>